<evidence type="ECO:0000255" key="1">
    <source>
        <dbReference type="HAMAP-Rule" id="MF_01328"/>
    </source>
</evidence>
<evidence type="ECO:0000256" key="2">
    <source>
        <dbReference type="SAM" id="MobiDB-lite"/>
    </source>
</evidence>
<evidence type="ECO:0000305" key="3"/>
<gene>
    <name evidence="1" type="primary">rplD</name>
    <name type="ordered locus">PG_1937</name>
</gene>
<proteinExistence type="inferred from homology"/>
<protein>
    <recommendedName>
        <fullName evidence="1">Large ribosomal subunit protein uL4</fullName>
    </recommendedName>
    <alternativeName>
        <fullName evidence="3">50S ribosomal protein L4</fullName>
    </alternativeName>
</protein>
<accession>Q7MTL4</accession>
<comment type="function">
    <text evidence="1">One of the primary rRNA binding proteins, this protein initially binds near the 5'-end of the 23S rRNA. It is important during the early stages of 50S assembly. It makes multiple contacts with different domains of the 23S rRNA in the assembled 50S subunit and ribosome.</text>
</comment>
<comment type="function">
    <text evidence="1">Forms part of the polypeptide exit tunnel.</text>
</comment>
<comment type="subunit">
    <text evidence="1">Part of the 50S ribosomal subunit.</text>
</comment>
<comment type="similarity">
    <text evidence="1">Belongs to the universal ribosomal protein uL4 family.</text>
</comment>
<keyword id="KW-1185">Reference proteome</keyword>
<keyword id="KW-0687">Ribonucleoprotein</keyword>
<keyword id="KW-0689">Ribosomal protein</keyword>
<keyword id="KW-0694">RNA-binding</keyword>
<keyword id="KW-0699">rRNA-binding</keyword>
<reference key="1">
    <citation type="journal article" date="2003" name="J. Bacteriol.">
        <title>Complete genome sequence of the oral pathogenic bacterium Porphyromonas gingivalis strain W83.</title>
        <authorList>
            <person name="Nelson K.E."/>
            <person name="Fleischmann R.D."/>
            <person name="DeBoy R.T."/>
            <person name="Paulsen I.T."/>
            <person name="Fouts D.E."/>
            <person name="Eisen J.A."/>
            <person name="Daugherty S.C."/>
            <person name="Dodson R.J."/>
            <person name="Durkin A.S."/>
            <person name="Gwinn M.L."/>
            <person name="Haft D.H."/>
            <person name="Kolonay J.F."/>
            <person name="Nelson W.C."/>
            <person name="Mason T.M."/>
            <person name="Tallon L."/>
            <person name="Gray J."/>
            <person name="Granger D."/>
            <person name="Tettelin H."/>
            <person name="Dong H."/>
            <person name="Galvin J.L."/>
            <person name="Duncan M.J."/>
            <person name="Dewhirst F.E."/>
            <person name="Fraser C.M."/>
        </authorList>
    </citation>
    <scope>NUCLEOTIDE SEQUENCE [LARGE SCALE GENOMIC DNA]</scope>
    <source>
        <strain>ATCC BAA-308 / W83</strain>
    </source>
</reference>
<name>RL4_PORGI</name>
<sequence>MELSVYNIKGEDTGKKVVLDDSIFAIEPNDHAIYLDVKQYMANQRQGTHKAKERSELSGSTRKLIRQKGSGGARRGDINSPLLSGGARVFGPRPRNYSFKLNKKLKALARRSALSYKAKNNEIIVVEDFNFDAPKTKAFKAISAALKVGEKKVLYVLPEVNKNVYLSARNLPNTNLILANLINTYTVLASKNLVLTERSVAVVNELFKA</sequence>
<feature type="chain" id="PRO_0000129255" description="Large ribosomal subunit protein uL4">
    <location>
        <begin position="1"/>
        <end position="209"/>
    </location>
</feature>
<feature type="region of interest" description="Disordered" evidence="2">
    <location>
        <begin position="45"/>
        <end position="80"/>
    </location>
</feature>
<organism>
    <name type="scientific">Porphyromonas gingivalis (strain ATCC BAA-308 / W83)</name>
    <dbReference type="NCBI Taxonomy" id="242619"/>
    <lineage>
        <taxon>Bacteria</taxon>
        <taxon>Pseudomonadati</taxon>
        <taxon>Bacteroidota</taxon>
        <taxon>Bacteroidia</taxon>
        <taxon>Bacteroidales</taxon>
        <taxon>Porphyromonadaceae</taxon>
        <taxon>Porphyromonas</taxon>
    </lineage>
</organism>
<dbReference type="EMBL" id="AE015924">
    <property type="protein sequence ID" value="AAQ66918.1"/>
    <property type="molecule type" value="Genomic_DNA"/>
</dbReference>
<dbReference type="RefSeq" id="WP_005873881.1">
    <property type="nucleotide sequence ID" value="NC_002950.2"/>
</dbReference>
<dbReference type="SMR" id="Q7MTL4"/>
<dbReference type="STRING" id="242619.PG_1937"/>
<dbReference type="EnsemblBacteria" id="AAQ66918">
    <property type="protein sequence ID" value="AAQ66918"/>
    <property type="gene ID" value="PG_1937"/>
</dbReference>
<dbReference type="KEGG" id="pgi:PG_1937"/>
<dbReference type="eggNOG" id="COG0088">
    <property type="taxonomic scope" value="Bacteria"/>
</dbReference>
<dbReference type="HOGENOM" id="CLU_041575_5_2_10"/>
<dbReference type="Proteomes" id="UP000000588">
    <property type="component" value="Chromosome"/>
</dbReference>
<dbReference type="GO" id="GO:1990904">
    <property type="term" value="C:ribonucleoprotein complex"/>
    <property type="evidence" value="ECO:0007669"/>
    <property type="project" value="UniProtKB-KW"/>
</dbReference>
<dbReference type="GO" id="GO:0005840">
    <property type="term" value="C:ribosome"/>
    <property type="evidence" value="ECO:0007669"/>
    <property type="project" value="UniProtKB-KW"/>
</dbReference>
<dbReference type="GO" id="GO:0019843">
    <property type="term" value="F:rRNA binding"/>
    <property type="evidence" value="ECO:0007669"/>
    <property type="project" value="UniProtKB-UniRule"/>
</dbReference>
<dbReference type="GO" id="GO:0003735">
    <property type="term" value="F:structural constituent of ribosome"/>
    <property type="evidence" value="ECO:0007669"/>
    <property type="project" value="InterPro"/>
</dbReference>
<dbReference type="GO" id="GO:0006412">
    <property type="term" value="P:translation"/>
    <property type="evidence" value="ECO:0007669"/>
    <property type="project" value="UniProtKB-UniRule"/>
</dbReference>
<dbReference type="Gene3D" id="3.40.1370.10">
    <property type="match status" value="1"/>
</dbReference>
<dbReference type="HAMAP" id="MF_01328_B">
    <property type="entry name" value="Ribosomal_uL4_B"/>
    <property type="match status" value="1"/>
</dbReference>
<dbReference type="InterPro" id="IPR002136">
    <property type="entry name" value="Ribosomal_uL4"/>
</dbReference>
<dbReference type="InterPro" id="IPR013005">
    <property type="entry name" value="Ribosomal_uL4-like"/>
</dbReference>
<dbReference type="InterPro" id="IPR023574">
    <property type="entry name" value="Ribosomal_uL4_dom_sf"/>
</dbReference>
<dbReference type="NCBIfam" id="TIGR03953">
    <property type="entry name" value="rplD_bact"/>
    <property type="match status" value="1"/>
</dbReference>
<dbReference type="PANTHER" id="PTHR10746">
    <property type="entry name" value="50S RIBOSOMAL PROTEIN L4"/>
    <property type="match status" value="1"/>
</dbReference>
<dbReference type="PANTHER" id="PTHR10746:SF6">
    <property type="entry name" value="LARGE RIBOSOMAL SUBUNIT PROTEIN UL4M"/>
    <property type="match status" value="1"/>
</dbReference>
<dbReference type="Pfam" id="PF00573">
    <property type="entry name" value="Ribosomal_L4"/>
    <property type="match status" value="1"/>
</dbReference>
<dbReference type="SUPFAM" id="SSF52166">
    <property type="entry name" value="Ribosomal protein L4"/>
    <property type="match status" value="1"/>
</dbReference>